<evidence type="ECO:0000255" key="1"/>
<evidence type="ECO:0000269" key="2">
    <source>
    </source>
</evidence>
<evidence type="ECO:0000269" key="3">
    <source>
    </source>
</evidence>
<evidence type="ECO:0000305" key="4"/>
<keyword id="KW-0025">Alternative splicing</keyword>
<keyword id="KW-0150">Chloroplast</keyword>
<keyword id="KW-0413">Isomerase</keyword>
<keyword id="KW-0472">Membrane</keyword>
<keyword id="KW-0934">Plastid</keyword>
<keyword id="KW-1185">Reference proteome</keyword>
<keyword id="KW-0809">Transit peptide</keyword>
<keyword id="KW-0812">Transmembrane</keyword>
<keyword id="KW-1133">Transmembrane helix</keyword>
<organism>
    <name type="scientific">Arabidopsis thaliana</name>
    <name type="common">Mouse-ear cress</name>
    <dbReference type="NCBI Taxonomy" id="3702"/>
    <lineage>
        <taxon>Eukaryota</taxon>
        <taxon>Viridiplantae</taxon>
        <taxon>Streptophyta</taxon>
        <taxon>Embryophyta</taxon>
        <taxon>Tracheophyta</taxon>
        <taxon>Spermatophyta</taxon>
        <taxon>Magnoliopsida</taxon>
        <taxon>eudicotyledons</taxon>
        <taxon>Gunneridae</taxon>
        <taxon>Pentapetalae</taxon>
        <taxon>rosids</taxon>
        <taxon>malvids</taxon>
        <taxon>Brassicales</taxon>
        <taxon>Brassicaceae</taxon>
        <taxon>Camelineae</taxon>
        <taxon>Arabidopsis</taxon>
    </lineage>
</organism>
<dbReference type="EC" id="5.2.1.12"/>
<dbReference type="EMBL" id="AC007354">
    <property type="protein sequence ID" value="AAD31330.1"/>
    <property type="molecule type" value="Genomic_DNA"/>
</dbReference>
<dbReference type="EMBL" id="CP002684">
    <property type="protein sequence ID" value="AEE28651.1"/>
    <property type="molecule type" value="Genomic_DNA"/>
</dbReference>
<dbReference type="EMBL" id="CP002684">
    <property type="protein sequence ID" value="AEE28652.1"/>
    <property type="molecule type" value="Genomic_DNA"/>
</dbReference>
<dbReference type="EMBL" id="AK221585">
    <property type="protein sequence ID" value="BAD95085.1"/>
    <property type="molecule type" value="mRNA"/>
</dbReference>
<dbReference type="EMBL" id="AF348578">
    <property type="protein sequence ID" value="AAK15549.1"/>
    <property type="molecule type" value="mRNA"/>
</dbReference>
<dbReference type="EMBL" id="AY086168">
    <property type="protein sequence ID" value="AAM63372.1"/>
    <property type="molecule type" value="mRNA"/>
</dbReference>
<dbReference type="EMBL" id="BX816671">
    <property type="status" value="NOT_ANNOTATED_CDS"/>
    <property type="molecule type" value="mRNA"/>
</dbReference>
<dbReference type="PIR" id="A86242">
    <property type="entry name" value="A86242"/>
</dbReference>
<dbReference type="RefSeq" id="NP_001117264.1">
    <molecule id="Q9SAC0-2"/>
    <property type="nucleotide sequence ID" value="NM_001123792.1"/>
</dbReference>
<dbReference type="RefSeq" id="NP_563879.1">
    <molecule id="Q9SAC0-1"/>
    <property type="nucleotide sequence ID" value="NM_100959.5"/>
</dbReference>
<dbReference type="FunCoup" id="Q9SAC0">
    <property type="interactions" value="930"/>
</dbReference>
<dbReference type="STRING" id="3702.Q9SAC0"/>
<dbReference type="iPTMnet" id="Q9SAC0"/>
<dbReference type="PaxDb" id="3702-AT1G10830.1"/>
<dbReference type="ProteomicsDB" id="242943">
    <molecule id="Q9SAC0-1"/>
</dbReference>
<dbReference type="EnsemblPlants" id="AT1G10830.1">
    <molecule id="Q9SAC0-1"/>
    <property type="protein sequence ID" value="AT1G10830.1"/>
    <property type="gene ID" value="AT1G10830"/>
</dbReference>
<dbReference type="EnsemblPlants" id="AT1G10830.2">
    <molecule id="Q9SAC0-2"/>
    <property type="protein sequence ID" value="AT1G10830.2"/>
    <property type="gene ID" value="AT1G10830"/>
</dbReference>
<dbReference type="GeneID" id="837626"/>
<dbReference type="Gramene" id="AT1G10830.1">
    <molecule id="Q9SAC0-1"/>
    <property type="protein sequence ID" value="AT1G10830.1"/>
    <property type="gene ID" value="AT1G10830"/>
</dbReference>
<dbReference type="Gramene" id="AT1G10830.2">
    <molecule id="Q9SAC0-2"/>
    <property type="protein sequence ID" value="AT1G10830.2"/>
    <property type="gene ID" value="AT1G10830"/>
</dbReference>
<dbReference type="KEGG" id="ath:AT1G10830"/>
<dbReference type="Araport" id="AT1G10830"/>
<dbReference type="TAIR" id="AT1G10830">
    <property type="gene designation" value="Z-ISO"/>
</dbReference>
<dbReference type="eggNOG" id="ENOG502QSJ3">
    <property type="taxonomic scope" value="Eukaryota"/>
</dbReference>
<dbReference type="HOGENOM" id="CLU_063140_0_0_1"/>
<dbReference type="InParanoid" id="Q9SAC0"/>
<dbReference type="OMA" id="YVLNVAW"/>
<dbReference type="OrthoDB" id="41527at2759"/>
<dbReference type="PhylomeDB" id="Q9SAC0"/>
<dbReference type="BioCyc" id="MetaCyc:AT1G10830-MONOMER"/>
<dbReference type="PRO" id="PR:Q9SAC0"/>
<dbReference type="Proteomes" id="UP000006548">
    <property type="component" value="Chromosome 1"/>
</dbReference>
<dbReference type="ExpressionAtlas" id="Q9SAC0">
    <property type="expression patterns" value="baseline and differential"/>
</dbReference>
<dbReference type="GO" id="GO:0009507">
    <property type="term" value="C:chloroplast"/>
    <property type="evidence" value="ECO:0007005"/>
    <property type="project" value="TAIR"/>
</dbReference>
<dbReference type="GO" id="GO:0031969">
    <property type="term" value="C:chloroplast membrane"/>
    <property type="evidence" value="ECO:0007669"/>
    <property type="project" value="UniProtKB-SubCell"/>
</dbReference>
<dbReference type="GO" id="GO:0090471">
    <property type="term" value="F:9,15,9'-tri-cis-zeta-carotene isomerase activity"/>
    <property type="evidence" value="ECO:0000314"/>
    <property type="project" value="TAIR"/>
</dbReference>
<dbReference type="GO" id="GO:0016120">
    <property type="term" value="P:carotene biosynthetic process"/>
    <property type="evidence" value="ECO:0000315"/>
    <property type="project" value="TAIR"/>
</dbReference>
<dbReference type="Gene3D" id="1.20.120.1630">
    <property type="match status" value="1"/>
</dbReference>
<dbReference type="InterPro" id="IPR009915">
    <property type="entry name" value="NnrU_dom"/>
</dbReference>
<dbReference type="PANTHER" id="PTHR35988">
    <property type="entry name" value="15-CIS-ZETA-CAROTENE ISOMERASE, CHLOROPLASTIC"/>
    <property type="match status" value="1"/>
</dbReference>
<dbReference type="PANTHER" id="PTHR35988:SF2">
    <property type="entry name" value="15-CIS-ZETA-CAROTENE ISOMERASE, CHLOROPLASTIC"/>
    <property type="match status" value="1"/>
</dbReference>
<dbReference type="Pfam" id="PF07298">
    <property type="entry name" value="NnrU"/>
    <property type="match status" value="1"/>
</dbReference>
<gene>
    <name type="primary">Z-ISO</name>
    <name type="ordered locus">At1g10830</name>
    <name type="ORF">T16B5.3</name>
</gene>
<feature type="transit peptide" description="Chloroplast" evidence="1">
    <location>
        <begin position="1"/>
        <end position="58"/>
    </location>
</feature>
<feature type="chain" id="PRO_0000413962" description="15-cis-zeta-carotene isomerase, chloroplastic">
    <location>
        <begin position="59"/>
        <end position="367"/>
    </location>
</feature>
<feature type="transmembrane region" description="Helical" evidence="1">
    <location>
        <begin position="95"/>
        <end position="115"/>
    </location>
</feature>
<feature type="transmembrane region" description="Helical" evidence="1">
    <location>
        <begin position="137"/>
        <end position="157"/>
    </location>
</feature>
<feature type="transmembrane region" description="Helical" evidence="1">
    <location>
        <begin position="172"/>
        <end position="192"/>
    </location>
</feature>
<feature type="transmembrane region" description="Helical" evidence="1">
    <location>
        <begin position="211"/>
        <end position="231"/>
    </location>
</feature>
<feature type="transmembrane region" description="Helical" evidence="1">
    <location>
        <begin position="269"/>
        <end position="289"/>
    </location>
</feature>
<feature type="transmembrane region" description="Helical" evidence="1">
    <location>
        <begin position="339"/>
        <end position="359"/>
    </location>
</feature>
<feature type="splice variant" id="VSP_041999" description="In isoform 2." evidence="4">
    <original>MVGQIVWCLAHTLWIGNTVAASASLGLIA</original>
    <variation>VLNISLMCLNMKTISFIFVFQKYRKIGFL</variation>
    <location>
        <begin position="257"/>
        <end position="285"/>
    </location>
</feature>
<feature type="splice variant" id="VSP_042000" description="In isoform 2." evidence="4">
    <location>
        <begin position="286"/>
        <end position="367"/>
    </location>
</feature>
<feature type="sequence conflict" description="In Ref. 5; AAM63372." evidence="4" ref="5">
    <original>S</original>
    <variation>Y</variation>
    <location>
        <position position="71"/>
    </location>
</feature>
<feature type="sequence conflict" description="In Ref. 5; AAM63372." evidence="4" ref="5">
    <original>E</original>
    <variation>K</variation>
    <location>
        <position position="304"/>
    </location>
</feature>
<protein>
    <recommendedName>
        <fullName>15-cis-zeta-carotene isomerase, chloroplastic</fullName>
        <ecNumber>5.2.1.12</ecNumber>
    </recommendedName>
</protein>
<comment type="function">
    <text evidence="3">Isomerase involved in the biosynthesis of carotenoids. Catalyzes the cis- to trans-conversion of the 15-cis-bond in 9,15,9'-tri-cis-zeta-carotene.</text>
</comment>
<comment type="catalytic activity">
    <reaction evidence="3">
        <text>9,9',15-tri-cis-zeta-carotene = 9,9'-di-cis-zeta-carotene</text>
        <dbReference type="Rhea" id="RHEA:30967"/>
        <dbReference type="ChEBI" id="CHEBI:48716"/>
        <dbReference type="ChEBI" id="CHEBI:48717"/>
        <dbReference type="EC" id="5.2.1.12"/>
    </reaction>
</comment>
<comment type="subcellular location">
    <subcellularLocation>
        <location evidence="4">Plastid</location>
        <location evidence="4">Chloroplast membrane</location>
        <topology evidence="4">Multi-pass membrane protein</topology>
    </subcellularLocation>
</comment>
<comment type="alternative products">
    <event type="alternative splicing"/>
    <isoform>
        <id>Q9SAC0-1</id>
        <name>1</name>
        <sequence type="displayed"/>
    </isoform>
    <isoform>
        <id>Q9SAC0-2</id>
        <name>2</name>
        <sequence type="described" ref="VSP_041999 VSP_042000"/>
    </isoform>
</comment>
<comment type="tissue specificity">
    <text evidence="3">Expressed in leaves and at lower levels in roots.</text>
</comment>
<comment type="induction">
    <text evidence="2 3">Up-regulated by light.</text>
</comment>
<comment type="disruption phenotype">
    <text evidence="3">Lacks carotenoids in the dark and exhibits delayed greening when exposed to light.</text>
</comment>
<comment type="miscellaneous">
    <molecule>Isoform 1</molecule>
    <text>Major isoform in both etiolated and green leaves.</text>
</comment>
<sequence>MAVYHLLLSSPPSLLLLPPSPRRPNLTLIRRIPAHPRLGNSTSLLSSSSPVIRKILVRSTLREDQPIASDSESSPTLLIGEDSAAFELGKQKLVSWVYFGVVLGVVLFILNVVWIDNSTGFGKSFIDAVSNISGSPEVAMLMLILIFAIVHSGLASLRDIGEKLIGERAFRVLFAGISLPLAMSTIVYFINHRYDGSQLWQLQGVPGVHEAIWVANFVSFFFLYPSTFNLLEVAAVDKPKMHLWETGIMRITRHPQMVGQIVWCLAHTLWIGNTVAASASLGLIAHHLFGAWNGDRRLAKRYGEDFESIKKRTSVIPFAAIFEGRQVLPEDYYKEFVRLPYLAITALTVGAYFAHPLMQGASFRLHW</sequence>
<name>ZCIS_ARATH</name>
<accession>Q9SAC0</accession>
<accession>B3H769</accession>
<accession>Q8LD73</accession>
<proteinExistence type="evidence at protein level"/>
<reference key="1">
    <citation type="journal article" date="2000" name="Nature">
        <title>Sequence and analysis of chromosome 1 of the plant Arabidopsis thaliana.</title>
        <authorList>
            <person name="Theologis A."/>
            <person name="Ecker J.R."/>
            <person name="Palm C.J."/>
            <person name="Federspiel N.A."/>
            <person name="Kaul S."/>
            <person name="White O."/>
            <person name="Alonso J."/>
            <person name="Altafi H."/>
            <person name="Araujo R."/>
            <person name="Bowman C.L."/>
            <person name="Brooks S.Y."/>
            <person name="Buehler E."/>
            <person name="Chan A."/>
            <person name="Chao Q."/>
            <person name="Chen H."/>
            <person name="Cheuk R.F."/>
            <person name="Chin C.W."/>
            <person name="Chung M.K."/>
            <person name="Conn L."/>
            <person name="Conway A.B."/>
            <person name="Conway A.R."/>
            <person name="Creasy T.H."/>
            <person name="Dewar K."/>
            <person name="Dunn P."/>
            <person name="Etgu P."/>
            <person name="Feldblyum T.V."/>
            <person name="Feng J.-D."/>
            <person name="Fong B."/>
            <person name="Fujii C.Y."/>
            <person name="Gill J.E."/>
            <person name="Goldsmith A.D."/>
            <person name="Haas B."/>
            <person name="Hansen N.F."/>
            <person name="Hughes B."/>
            <person name="Huizar L."/>
            <person name="Hunter J.L."/>
            <person name="Jenkins J."/>
            <person name="Johnson-Hopson C."/>
            <person name="Khan S."/>
            <person name="Khaykin E."/>
            <person name="Kim C.J."/>
            <person name="Koo H.L."/>
            <person name="Kremenetskaia I."/>
            <person name="Kurtz D.B."/>
            <person name="Kwan A."/>
            <person name="Lam B."/>
            <person name="Langin-Hooper S."/>
            <person name="Lee A."/>
            <person name="Lee J.M."/>
            <person name="Lenz C.A."/>
            <person name="Li J.H."/>
            <person name="Li Y.-P."/>
            <person name="Lin X."/>
            <person name="Liu S.X."/>
            <person name="Liu Z.A."/>
            <person name="Luros J.S."/>
            <person name="Maiti R."/>
            <person name="Marziali A."/>
            <person name="Militscher J."/>
            <person name="Miranda M."/>
            <person name="Nguyen M."/>
            <person name="Nierman W.C."/>
            <person name="Osborne B.I."/>
            <person name="Pai G."/>
            <person name="Peterson J."/>
            <person name="Pham P.K."/>
            <person name="Rizzo M."/>
            <person name="Rooney T."/>
            <person name="Rowley D."/>
            <person name="Sakano H."/>
            <person name="Salzberg S.L."/>
            <person name="Schwartz J.R."/>
            <person name="Shinn P."/>
            <person name="Southwick A.M."/>
            <person name="Sun H."/>
            <person name="Tallon L.J."/>
            <person name="Tambunga G."/>
            <person name="Toriumi M.J."/>
            <person name="Town C.D."/>
            <person name="Utterback T."/>
            <person name="Van Aken S."/>
            <person name="Vaysberg M."/>
            <person name="Vysotskaia V.S."/>
            <person name="Walker M."/>
            <person name="Wu D."/>
            <person name="Yu G."/>
            <person name="Fraser C.M."/>
            <person name="Venter J.C."/>
            <person name="Davis R.W."/>
        </authorList>
    </citation>
    <scope>NUCLEOTIDE SEQUENCE [LARGE SCALE GENOMIC DNA]</scope>
    <source>
        <strain>cv. Columbia</strain>
    </source>
</reference>
<reference key="2">
    <citation type="journal article" date="2017" name="Plant J.">
        <title>Araport11: a complete reannotation of the Arabidopsis thaliana reference genome.</title>
        <authorList>
            <person name="Cheng C.Y."/>
            <person name="Krishnakumar V."/>
            <person name="Chan A.P."/>
            <person name="Thibaud-Nissen F."/>
            <person name="Schobel S."/>
            <person name="Town C.D."/>
        </authorList>
    </citation>
    <scope>GENOME REANNOTATION</scope>
    <source>
        <strain>cv. Columbia</strain>
    </source>
</reference>
<reference key="3">
    <citation type="journal article" date="2003" name="Science">
        <title>Empirical analysis of transcriptional activity in the Arabidopsis genome.</title>
        <authorList>
            <person name="Yamada K."/>
            <person name="Lim J."/>
            <person name="Dale J.M."/>
            <person name="Chen H."/>
            <person name="Shinn P."/>
            <person name="Palm C.J."/>
            <person name="Southwick A.M."/>
            <person name="Wu H.C."/>
            <person name="Kim C.J."/>
            <person name="Nguyen M."/>
            <person name="Pham P.K."/>
            <person name="Cheuk R.F."/>
            <person name="Karlin-Newmann G."/>
            <person name="Liu S.X."/>
            <person name="Lam B."/>
            <person name="Sakano H."/>
            <person name="Wu T."/>
            <person name="Yu G."/>
            <person name="Miranda M."/>
            <person name="Quach H.L."/>
            <person name="Tripp M."/>
            <person name="Chang C.H."/>
            <person name="Lee J.M."/>
            <person name="Toriumi M.J."/>
            <person name="Chan M.M."/>
            <person name="Tang C.C."/>
            <person name="Onodera C.S."/>
            <person name="Deng J.M."/>
            <person name="Akiyama K."/>
            <person name="Ansari Y."/>
            <person name="Arakawa T."/>
            <person name="Banh J."/>
            <person name="Banno F."/>
            <person name="Bowser L."/>
            <person name="Brooks S.Y."/>
            <person name="Carninci P."/>
            <person name="Chao Q."/>
            <person name="Choy N."/>
            <person name="Enju A."/>
            <person name="Goldsmith A.D."/>
            <person name="Gurjal M."/>
            <person name="Hansen N.F."/>
            <person name="Hayashizaki Y."/>
            <person name="Johnson-Hopson C."/>
            <person name="Hsuan V.W."/>
            <person name="Iida K."/>
            <person name="Karnes M."/>
            <person name="Khan S."/>
            <person name="Koesema E."/>
            <person name="Ishida J."/>
            <person name="Jiang P.X."/>
            <person name="Jones T."/>
            <person name="Kawai J."/>
            <person name="Kamiya A."/>
            <person name="Meyers C."/>
            <person name="Nakajima M."/>
            <person name="Narusaka M."/>
            <person name="Seki M."/>
            <person name="Sakurai T."/>
            <person name="Satou M."/>
            <person name="Tamse R."/>
            <person name="Vaysberg M."/>
            <person name="Wallender E.K."/>
            <person name="Wong C."/>
            <person name="Yamamura Y."/>
            <person name="Yuan S."/>
            <person name="Shinozaki K."/>
            <person name="Davis R.W."/>
            <person name="Theologis A."/>
            <person name="Ecker J.R."/>
        </authorList>
    </citation>
    <scope>NUCLEOTIDE SEQUENCE [LARGE SCALE MRNA] (ISOFORM 1)</scope>
    <source>
        <strain>cv. Columbia</strain>
    </source>
</reference>
<reference key="4">
    <citation type="submission" date="2005-03" db="EMBL/GenBank/DDBJ databases">
        <title>Large-scale analysis of RIKEN Arabidopsis full-length (RAFL) cDNAs.</title>
        <authorList>
            <person name="Totoki Y."/>
            <person name="Seki M."/>
            <person name="Ishida J."/>
            <person name="Nakajima M."/>
            <person name="Enju A."/>
            <person name="Kamiya A."/>
            <person name="Narusaka M."/>
            <person name="Shin-i T."/>
            <person name="Nakagawa M."/>
            <person name="Sakamoto N."/>
            <person name="Oishi K."/>
            <person name="Kohara Y."/>
            <person name="Kobayashi M."/>
            <person name="Toyoda A."/>
            <person name="Sakaki Y."/>
            <person name="Sakurai T."/>
            <person name="Iida K."/>
            <person name="Akiyama K."/>
            <person name="Satou M."/>
            <person name="Toyoda T."/>
            <person name="Konagaya A."/>
            <person name="Carninci P."/>
            <person name="Kawai J."/>
            <person name="Hayashizaki Y."/>
            <person name="Shinozaki K."/>
        </authorList>
    </citation>
    <scope>NUCLEOTIDE SEQUENCE [LARGE SCALE MRNA] (ISOFORM 1)</scope>
    <source>
        <strain>cv. Columbia</strain>
    </source>
</reference>
<reference key="5">
    <citation type="submission" date="2002-03" db="EMBL/GenBank/DDBJ databases">
        <title>Full-length cDNA from Arabidopsis thaliana.</title>
        <authorList>
            <person name="Brover V.V."/>
            <person name="Troukhan M.E."/>
            <person name="Alexandrov N.A."/>
            <person name="Lu Y.-P."/>
            <person name="Flavell R.B."/>
            <person name="Feldmann K.A."/>
        </authorList>
    </citation>
    <scope>NUCLEOTIDE SEQUENCE [LARGE SCALE MRNA] (ISOFORM 1)</scope>
</reference>
<reference key="6">
    <citation type="journal article" date="2004" name="Genome Res.">
        <title>Whole genome sequence comparisons and 'full-length' cDNA sequences: a combined approach to evaluate and improve Arabidopsis genome annotation.</title>
        <authorList>
            <person name="Castelli V."/>
            <person name="Aury J.-M."/>
            <person name="Jaillon O."/>
            <person name="Wincker P."/>
            <person name="Clepet C."/>
            <person name="Menard M."/>
            <person name="Cruaud C."/>
            <person name="Quetier F."/>
            <person name="Scarpelli C."/>
            <person name="Schaechter V."/>
            <person name="Temple G."/>
            <person name="Caboche M."/>
            <person name="Weissenbach J."/>
            <person name="Salanoubat M."/>
        </authorList>
    </citation>
    <scope>PARTIAL NUCLEOTIDE SEQUENCE [LARGE SCALE MRNA] (ISOFORM 2)</scope>
    <source>
        <strain>cv. Columbia</strain>
    </source>
</reference>
<reference key="7">
    <citation type="journal article" date="2009" name="Plant Cell Physiol.">
        <title>Orthogenomics of photosynthetic organisms: bioinformatic and experimental analysis of chloroplast proteins of endosymbiont origin in Arabidopsis and their counterparts in Synechocystis.</title>
        <authorList>
            <person name="Ishikawa M."/>
            <person name="Fujiwara M."/>
            <person name="Sonoike K."/>
            <person name="Sato N."/>
        </authorList>
    </citation>
    <scope>SUBCELLULAR LOCATION</scope>
    <scope>INDUCTION BY LIGHT [LARGE SCALE ANALYSIS]</scope>
</reference>
<reference key="8">
    <citation type="journal article" date="2010" name="Plant Physiol.">
        <title>Isolation and characterization of the Z-ISO gene encoding a missing component of carotenoid biosynthesis in plants.</title>
        <authorList>
            <person name="Chen Y."/>
            <person name="Li F."/>
            <person name="Wurtzel E.T."/>
        </authorList>
    </citation>
    <scope>FUNCTION</scope>
    <scope>ALTERNATIVE SPLICING</scope>
    <scope>CATALYTIC ACTIVITY</scope>
    <scope>TISSUE SPECIFICITY</scope>
    <scope>INDUCTION BY LIGHT</scope>
    <scope>DISRUPTION PHENOTYPE</scope>
</reference>